<feature type="chain" id="PRO_0000122020" description="Serine--tRNA ligase">
    <location>
        <begin position="1"/>
        <end position="432"/>
    </location>
</feature>
<feature type="binding site" evidence="1">
    <location>
        <begin position="238"/>
        <end position="240"/>
    </location>
    <ligand>
        <name>L-serine</name>
        <dbReference type="ChEBI" id="CHEBI:33384"/>
    </ligand>
</feature>
<feature type="binding site" evidence="1">
    <location>
        <begin position="269"/>
        <end position="271"/>
    </location>
    <ligand>
        <name>ATP</name>
        <dbReference type="ChEBI" id="CHEBI:30616"/>
    </ligand>
</feature>
<feature type="binding site" evidence="1">
    <location>
        <position position="292"/>
    </location>
    <ligand>
        <name>L-serine</name>
        <dbReference type="ChEBI" id="CHEBI:33384"/>
    </ligand>
</feature>
<feature type="binding site" evidence="1">
    <location>
        <begin position="356"/>
        <end position="359"/>
    </location>
    <ligand>
        <name>ATP</name>
        <dbReference type="ChEBI" id="CHEBI:30616"/>
    </ligand>
</feature>
<feature type="binding site" evidence="1">
    <location>
        <position position="392"/>
    </location>
    <ligand>
        <name>L-serine</name>
        <dbReference type="ChEBI" id="CHEBI:33384"/>
    </ligand>
</feature>
<evidence type="ECO:0000255" key="1">
    <source>
        <dbReference type="HAMAP-Rule" id="MF_00176"/>
    </source>
</evidence>
<dbReference type="EC" id="6.1.1.11" evidence="1"/>
<dbReference type="EMBL" id="AE016826">
    <property type="protein sequence ID" value="AAO27015.1"/>
    <property type="molecule type" value="Genomic_DNA"/>
</dbReference>
<dbReference type="RefSeq" id="WP_011091416.1">
    <property type="nucleotide sequence ID" value="NC_004545.1"/>
</dbReference>
<dbReference type="SMR" id="P59553"/>
<dbReference type="STRING" id="224915.bbp_290"/>
<dbReference type="KEGG" id="bab:bbp_290"/>
<dbReference type="eggNOG" id="COG0172">
    <property type="taxonomic scope" value="Bacteria"/>
</dbReference>
<dbReference type="HOGENOM" id="CLU_023797_1_1_6"/>
<dbReference type="OrthoDB" id="9804647at2"/>
<dbReference type="UniPathway" id="UPA00906">
    <property type="reaction ID" value="UER00895"/>
</dbReference>
<dbReference type="Proteomes" id="UP000000601">
    <property type="component" value="Chromosome"/>
</dbReference>
<dbReference type="GO" id="GO:0005737">
    <property type="term" value="C:cytoplasm"/>
    <property type="evidence" value="ECO:0007669"/>
    <property type="project" value="UniProtKB-SubCell"/>
</dbReference>
<dbReference type="GO" id="GO:0005524">
    <property type="term" value="F:ATP binding"/>
    <property type="evidence" value="ECO:0007669"/>
    <property type="project" value="UniProtKB-UniRule"/>
</dbReference>
<dbReference type="GO" id="GO:0004828">
    <property type="term" value="F:serine-tRNA ligase activity"/>
    <property type="evidence" value="ECO:0007669"/>
    <property type="project" value="UniProtKB-UniRule"/>
</dbReference>
<dbReference type="GO" id="GO:0016260">
    <property type="term" value="P:selenocysteine biosynthetic process"/>
    <property type="evidence" value="ECO:0007669"/>
    <property type="project" value="UniProtKB-UniRule"/>
</dbReference>
<dbReference type="GO" id="GO:0006434">
    <property type="term" value="P:seryl-tRNA aminoacylation"/>
    <property type="evidence" value="ECO:0007669"/>
    <property type="project" value="UniProtKB-UniRule"/>
</dbReference>
<dbReference type="CDD" id="cd00770">
    <property type="entry name" value="SerRS_core"/>
    <property type="match status" value="1"/>
</dbReference>
<dbReference type="Gene3D" id="3.30.930.10">
    <property type="entry name" value="Bira Bifunctional Protein, Domain 2"/>
    <property type="match status" value="1"/>
</dbReference>
<dbReference type="Gene3D" id="1.10.287.40">
    <property type="entry name" value="Serine-tRNA synthetase, tRNA binding domain"/>
    <property type="match status" value="1"/>
</dbReference>
<dbReference type="HAMAP" id="MF_00176">
    <property type="entry name" value="Ser_tRNA_synth_type1"/>
    <property type="match status" value="1"/>
</dbReference>
<dbReference type="InterPro" id="IPR002314">
    <property type="entry name" value="aa-tRNA-synt_IIb"/>
</dbReference>
<dbReference type="InterPro" id="IPR006195">
    <property type="entry name" value="aa-tRNA-synth_II"/>
</dbReference>
<dbReference type="InterPro" id="IPR045864">
    <property type="entry name" value="aa-tRNA-synth_II/BPL/LPL"/>
</dbReference>
<dbReference type="InterPro" id="IPR002317">
    <property type="entry name" value="Ser-tRNA-ligase_type_1"/>
</dbReference>
<dbReference type="InterPro" id="IPR015866">
    <property type="entry name" value="Ser-tRNA-synth_1_N"/>
</dbReference>
<dbReference type="InterPro" id="IPR042103">
    <property type="entry name" value="SerRS_1_N_sf"/>
</dbReference>
<dbReference type="InterPro" id="IPR033729">
    <property type="entry name" value="SerRS_core"/>
</dbReference>
<dbReference type="InterPro" id="IPR010978">
    <property type="entry name" value="tRNA-bd_arm"/>
</dbReference>
<dbReference type="NCBIfam" id="TIGR00414">
    <property type="entry name" value="serS"/>
    <property type="match status" value="1"/>
</dbReference>
<dbReference type="PANTHER" id="PTHR43697:SF1">
    <property type="entry name" value="SERINE--TRNA LIGASE"/>
    <property type="match status" value="1"/>
</dbReference>
<dbReference type="PANTHER" id="PTHR43697">
    <property type="entry name" value="SERYL-TRNA SYNTHETASE"/>
    <property type="match status" value="1"/>
</dbReference>
<dbReference type="Pfam" id="PF02403">
    <property type="entry name" value="Seryl_tRNA_N"/>
    <property type="match status" value="1"/>
</dbReference>
<dbReference type="Pfam" id="PF00587">
    <property type="entry name" value="tRNA-synt_2b"/>
    <property type="match status" value="1"/>
</dbReference>
<dbReference type="PIRSF" id="PIRSF001529">
    <property type="entry name" value="Ser-tRNA-synth_IIa"/>
    <property type="match status" value="1"/>
</dbReference>
<dbReference type="PRINTS" id="PR00981">
    <property type="entry name" value="TRNASYNTHSER"/>
</dbReference>
<dbReference type="SUPFAM" id="SSF55681">
    <property type="entry name" value="Class II aaRS and biotin synthetases"/>
    <property type="match status" value="1"/>
</dbReference>
<dbReference type="SUPFAM" id="SSF46589">
    <property type="entry name" value="tRNA-binding arm"/>
    <property type="match status" value="1"/>
</dbReference>
<dbReference type="PROSITE" id="PS50862">
    <property type="entry name" value="AA_TRNA_LIGASE_II"/>
    <property type="match status" value="1"/>
</dbReference>
<name>SYS_BUCBP</name>
<keyword id="KW-0030">Aminoacyl-tRNA synthetase</keyword>
<keyword id="KW-0067">ATP-binding</keyword>
<keyword id="KW-0963">Cytoplasm</keyword>
<keyword id="KW-0436">Ligase</keyword>
<keyword id="KW-0547">Nucleotide-binding</keyword>
<keyword id="KW-0648">Protein biosynthesis</keyword>
<keyword id="KW-1185">Reference proteome</keyword>
<sequence>MLNPNLLRNHIEFVFKNLARRGFSLDVKQFTEMEKKRKILQTKVEELQSRHNTLSKHIGRIKLIHPNIQCMKERIITLKKKIDVMKKELKILLEQIHIFLMNIPNLPDINIPDGMGSDDNQEVSRWGIIKNYNFKIKNHVELGNHLNGFDWKSAANISGSRFFIMKGKIALLYRVLGQFMLDLHTNEHGYLETYVPCLVKTNNLYGTGQLPRFKTDLFYAKSLLDESQNNNNFALIPTAEVPLTNLFRDCILDEQQLPIMLVAKTPCFRSEALSYGRDTQGLIRTHQFDKVEIVQIVHPSDSMQKLEELTIHAERVLKLLKLPYRKTLLCTRDIGFSSSKTYDLEVWFPSQNVYREVSSCSNMLDFQARRIKARFHCNAQNKKIFIHTINGSGLAVGRTLAAILENYQQKDGRIKIPKILRNNYMNGLEFLE</sequence>
<gene>
    <name evidence="1" type="primary">serS</name>
    <name type="ordered locus">bbp_290</name>
</gene>
<comment type="function">
    <text evidence="1">Catalyzes the attachment of serine to tRNA(Ser). Is also able to aminoacylate tRNA(Sec) with serine, to form the misacylated tRNA L-seryl-tRNA(Sec), which will be further converted into selenocysteinyl-tRNA(Sec).</text>
</comment>
<comment type="catalytic activity">
    <reaction evidence="1">
        <text>tRNA(Ser) + L-serine + ATP = L-seryl-tRNA(Ser) + AMP + diphosphate + H(+)</text>
        <dbReference type="Rhea" id="RHEA:12292"/>
        <dbReference type="Rhea" id="RHEA-COMP:9669"/>
        <dbReference type="Rhea" id="RHEA-COMP:9703"/>
        <dbReference type="ChEBI" id="CHEBI:15378"/>
        <dbReference type="ChEBI" id="CHEBI:30616"/>
        <dbReference type="ChEBI" id="CHEBI:33019"/>
        <dbReference type="ChEBI" id="CHEBI:33384"/>
        <dbReference type="ChEBI" id="CHEBI:78442"/>
        <dbReference type="ChEBI" id="CHEBI:78533"/>
        <dbReference type="ChEBI" id="CHEBI:456215"/>
        <dbReference type="EC" id="6.1.1.11"/>
    </reaction>
</comment>
<comment type="catalytic activity">
    <reaction evidence="1">
        <text>tRNA(Sec) + L-serine + ATP = L-seryl-tRNA(Sec) + AMP + diphosphate + H(+)</text>
        <dbReference type="Rhea" id="RHEA:42580"/>
        <dbReference type="Rhea" id="RHEA-COMP:9742"/>
        <dbReference type="Rhea" id="RHEA-COMP:10128"/>
        <dbReference type="ChEBI" id="CHEBI:15378"/>
        <dbReference type="ChEBI" id="CHEBI:30616"/>
        <dbReference type="ChEBI" id="CHEBI:33019"/>
        <dbReference type="ChEBI" id="CHEBI:33384"/>
        <dbReference type="ChEBI" id="CHEBI:78442"/>
        <dbReference type="ChEBI" id="CHEBI:78533"/>
        <dbReference type="ChEBI" id="CHEBI:456215"/>
        <dbReference type="EC" id="6.1.1.11"/>
    </reaction>
</comment>
<comment type="pathway">
    <text evidence="1">Aminoacyl-tRNA biosynthesis; selenocysteinyl-tRNA(Sec) biosynthesis; L-seryl-tRNA(Sec) from L-serine and tRNA(Sec): step 1/1.</text>
</comment>
<comment type="subunit">
    <text evidence="1">Homodimer. The tRNA molecule binds across the dimer.</text>
</comment>
<comment type="subcellular location">
    <subcellularLocation>
        <location evidence="1">Cytoplasm</location>
    </subcellularLocation>
</comment>
<comment type="domain">
    <text evidence="1">Consists of two distinct domains, a catalytic core and a N-terminal extension that is involved in tRNA binding.</text>
</comment>
<comment type="similarity">
    <text evidence="1">Belongs to the class-II aminoacyl-tRNA synthetase family. Type-1 seryl-tRNA synthetase subfamily.</text>
</comment>
<proteinExistence type="inferred from homology"/>
<protein>
    <recommendedName>
        <fullName evidence="1">Serine--tRNA ligase</fullName>
        <ecNumber evidence="1">6.1.1.11</ecNumber>
    </recommendedName>
    <alternativeName>
        <fullName evidence="1">Seryl-tRNA synthetase</fullName>
        <shortName evidence="1">SerRS</shortName>
    </alternativeName>
    <alternativeName>
        <fullName evidence="1">Seryl-tRNA(Ser/Sec) synthetase</fullName>
    </alternativeName>
</protein>
<reference key="1">
    <citation type="journal article" date="2003" name="Proc. Natl. Acad. Sci. U.S.A.">
        <title>Reductive genome evolution in Buchnera aphidicola.</title>
        <authorList>
            <person name="van Ham R.C.H.J."/>
            <person name="Kamerbeek J."/>
            <person name="Palacios C."/>
            <person name="Rausell C."/>
            <person name="Abascal F."/>
            <person name="Bastolla U."/>
            <person name="Fernandez J.M."/>
            <person name="Jimenez L."/>
            <person name="Postigo M."/>
            <person name="Silva F.J."/>
            <person name="Tamames J."/>
            <person name="Viguera E."/>
            <person name="Latorre A."/>
            <person name="Valencia A."/>
            <person name="Moran F."/>
            <person name="Moya A."/>
        </authorList>
    </citation>
    <scope>NUCLEOTIDE SEQUENCE [LARGE SCALE GENOMIC DNA]</scope>
    <source>
        <strain>Bp</strain>
    </source>
</reference>
<accession>P59553</accession>
<organism>
    <name type="scientific">Buchnera aphidicola subsp. Baizongia pistaciae (strain Bp)</name>
    <dbReference type="NCBI Taxonomy" id="224915"/>
    <lineage>
        <taxon>Bacteria</taxon>
        <taxon>Pseudomonadati</taxon>
        <taxon>Pseudomonadota</taxon>
        <taxon>Gammaproteobacteria</taxon>
        <taxon>Enterobacterales</taxon>
        <taxon>Erwiniaceae</taxon>
        <taxon>Buchnera</taxon>
    </lineage>
</organism>